<evidence type="ECO:0000255" key="1">
    <source>
        <dbReference type="HAMAP-Rule" id="MF_01805"/>
    </source>
</evidence>
<dbReference type="EMBL" id="CP001175">
    <property type="protein sequence ID" value="ACK38961.1"/>
    <property type="molecule type" value="Genomic_DNA"/>
</dbReference>
<dbReference type="RefSeq" id="WP_003728773.1">
    <property type="nucleotide sequence ID" value="NC_011660.1"/>
</dbReference>
<dbReference type="SMR" id="B8DBX5"/>
<dbReference type="KEGG" id="lmh:LMHCC_0605"/>
<dbReference type="HOGENOM" id="CLU_038686_3_1_9"/>
<dbReference type="GO" id="GO:0005737">
    <property type="term" value="C:cytoplasm"/>
    <property type="evidence" value="ECO:0007669"/>
    <property type="project" value="UniProtKB-SubCell"/>
</dbReference>
<dbReference type="GO" id="GO:0051301">
    <property type="term" value="P:cell division"/>
    <property type="evidence" value="ECO:0007669"/>
    <property type="project" value="UniProtKB-KW"/>
</dbReference>
<dbReference type="GO" id="GO:0007059">
    <property type="term" value="P:chromosome segregation"/>
    <property type="evidence" value="ECO:0007669"/>
    <property type="project" value="UniProtKB-UniRule"/>
</dbReference>
<dbReference type="GO" id="GO:0006260">
    <property type="term" value="P:DNA replication"/>
    <property type="evidence" value="ECO:0007669"/>
    <property type="project" value="UniProtKB-UniRule"/>
</dbReference>
<dbReference type="Gene3D" id="6.10.250.2410">
    <property type="match status" value="1"/>
</dbReference>
<dbReference type="Gene3D" id="1.10.10.580">
    <property type="entry name" value="Structural maintenance of chromosome 1. Chain E"/>
    <property type="match status" value="1"/>
</dbReference>
<dbReference type="HAMAP" id="MF_01805">
    <property type="entry name" value="ScpA"/>
    <property type="match status" value="1"/>
</dbReference>
<dbReference type="InterPro" id="IPR003768">
    <property type="entry name" value="ScpA"/>
</dbReference>
<dbReference type="InterPro" id="IPR023093">
    <property type="entry name" value="ScpA-like_C"/>
</dbReference>
<dbReference type="NCBIfam" id="NF000995">
    <property type="entry name" value="PRK00104.1-4"/>
    <property type="match status" value="1"/>
</dbReference>
<dbReference type="PANTHER" id="PTHR33969">
    <property type="entry name" value="SEGREGATION AND CONDENSATION PROTEIN A"/>
    <property type="match status" value="1"/>
</dbReference>
<dbReference type="PANTHER" id="PTHR33969:SF2">
    <property type="entry name" value="SEGREGATION AND CONDENSATION PROTEIN A"/>
    <property type="match status" value="1"/>
</dbReference>
<dbReference type="Pfam" id="PF02616">
    <property type="entry name" value="SMC_ScpA"/>
    <property type="match status" value="1"/>
</dbReference>
<sequence>MVEMNFKVDAFEGPLDLLLHLIGQLEVDIYDIPMAEITDQYMEFVHTMQEMELDVASEYLVMAATLLAIKSKMLLPKQELEIDYDTLEEEEDPRDALVEKLMEYKRFKEAAKELKEKEAERSFYFSKPPMDLAEYDDGTKVAELDVSLNDMLSAFNKMLRRKKLNKPLHTRITTQEISIDERMDSVLGKLHQQVNHRLRFDELFEEQTKEQLVVTFLALLELMKRKLVEVEQAESFADLYVQGKGEELS</sequence>
<protein>
    <recommendedName>
        <fullName evidence="1">Segregation and condensation protein A</fullName>
    </recommendedName>
</protein>
<reference key="1">
    <citation type="journal article" date="2011" name="J. Bacteriol.">
        <title>Genome sequence of lineage III Listeria monocytogenes strain HCC23.</title>
        <authorList>
            <person name="Steele C.L."/>
            <person name="Donaldson J.R."/>
            <person name="Paul D."/>
            <person name="Banes M.M."/>
            <person name="Arick T."/>
            <person name="Bridges S.M."/>
            <person name="Lawrence M.L."/>
        </authorList>
    </citation>
    <scope>NUCLEOTIDE SEQUENCE [LARGE SCALE GENOMIC DNA]</scope>
    <source>
        <strain>HCC23</strain>
    </source>
</reference>
<feature type="chain" id="PRO_1000187564" description="Segregation and condensation protein A">
    <location>
        <begin position="1"/>
        <end position="249"/>
    </location>
</feature>
<name>SCPA_LISMH</name>
<accession>B8DBX5</accession>
<proteinExistence type="inferred from homology"/>
<keyword id="KW-0131">Cell cycle</keyword>
<keyword id="KW-0132">Cell division</keyword>
<keyword id="KW-0159">Chromosome partition</keyword>
<keyword id="KW-0963">Cytoplasm</keyword>
<gene>
    <name evidence="1" type="primary">scpA</name>
    <name type="ordered locus">LMHCC_0605</name>
</gene>
<organism>
    <name type="scientific">Listeria monocytogenes serotype 4a (strain HCC23)</name>
    <dbReference type="NCBI Taxonomy" id="552536"/>
    <lineage>
        <taxon>Bacteria</taxon>
        <taxon>Bacillati</taxon>
        <taxon>Bacillota</taxon>
        <taxon>Bacilli</taxon>
        <taxon>Bacillales</taxon>
        <taxon>Listeriaceae</taxon>
        <taxon>Listeria</taxon>
    </lineage>
</organism>
<comment type="function">
    <text evidence="1">Participates in chromosomal partition during cell division. May act via the formation of a condensin-like complex containing Smc and ScpB that pull DNA away from mid-cell into both cell halves.</text>
</comment>
<comment type="subunit">
    <text evidence="1">Component of a cohesin-like complex composed of ScpA, ScpB and the Smc homodimer, in which ScpA and ScpB bind to the head domain of Smc. The presence of the three proteins is required for the association of the complex with DNA.</text>
</comment>
<comment type="subcellular location">
    <subcellularLocation>
        <location evidence="1">Cytoplasm</location>
    </subcellularLocation>
    <text evidence="1">Associated with two foci at the outer edges of the nucleoid region in young cells, and at four foci within both cell halves in older cells.</text>
</comment>
<comment type="similarity">
    <text evidence="1">Belongs to the ScpA family.</text>
</comment>